<comment type="function">
    <text>Core component of nucleosome. Nucleosomes wrap and compact DNA into chromatin, limiting DNA accessibility to the cellular machineries which require DNA as a template. Histones thereby play a central role in transcription regulation, DNA repair, DNA replication and chromosomal stability. DNA accessibility is regulated via a complex set of post-translational modifications of histones, also called histone code, and nucleosome remodeling.</text>
</comment>
<comment type="subunit">
    <text>The nucleosome is a histone octamer containing two molecules each of H2A, H2B, H3 and H4 assembled in one H3-H4 heterotetramer and two H2A-H2B heterodimers. The octamer wraps approximately 147 bp of DNA.</text>
</comment>
<comment type="subcellular location">
    <subcellularLocation>
        <location evidence="1">Nucleus</location>
    </subcellularLocation>
    <subcellularLocation>
        <location evidence="1">Chromosome</location>
    </subcellularLocation>
</comment>
<comment type="similarity">
    <text evidence="2">Belongs to the histone H2A family.</text>
</comment>
<reference key="1">
    <citation type="journal article" date="2005" name="Nature">
        <title>The map-based sequence of the rice genome.</title>
        <authorList>
            <consortium name="International rice genome sequencing project (IRGSP)"/>
        </authorList>
    </citation>
    <scope>NUCLEOTIDE SEQUENCE [LARGE SCALE GENOMIC DNA]</scope>
    <source>
        <strain>cv. Nipponbare</strain>
    </source>
</reference>
<reference key="2">
    <citation type="journal article" date="2008" name="Nucleic Acids Res.">
        <title>The rice annotation project database (RAP-DB): 2008 update.</title>
        <authorList>
            <consortium name="The rice annotation project (RAP)"/>
        </authorList>
    </citation>
    <scope>GENOME REANNOTATION</scope>
    <source>
        <strain>cv. Nipponbare</strain>
    </source>
</reference>
<reference key="3">
    <citation type="journal article" date="2013" name="Rice">
        <title>Improvement of the Oryza sativa Nipponbare reference genome using next generation sequence and optical map data.</title>
        <authorList>
            <person name="Kawahara Y."/>
            <person name="de la Bastide M."/>
            <person name="Hamilton J.P."/>
            <person name="Kanamori H."/>
            <person name="McCombie W.R."/>
            <person name="Ouyang S."/>
            <person name="Schwartz D.C."/>
            <person name="Tanaka T."/>
            <person name="Wu J."/>
            <person name="Zhou S."/>
            <person name="Childs K.L."/>
            <person name="Davidson R.M."/>
            <person name="Lin H."/>
            <person name="Quesada-Ocampo L."/>
            <person name="Vaillancourt B."/>
            <person name="Sakai H."/>
            <person name="Lee S.S."/>
            <person name="Kim J."/>
            <person name="Numa H."/>
            <person name="Itoh T."/>
            <person name="Buell C.R."/>
            <person name="Matsumoto T."/>
        </authorList>
    </citation>
    <scope>GENOME REANNOTATION</scope>
    <source>
        <strain>cv. Nipponbare</strain>
    </source>
</reference>
<reference key="4">
    <citation type="journal article" date="2005" name="PLoS Biol.">
        <title>The genomes of Oryza sativa: a history of duplications.</title>
        <authorList>
            <person name="Yu J."/>
            <person name="Wang J."/>
            <person name="Lin W."/>
            <person name="Li S."/>
            <person name="Li H."/>
            <person name="Zhou J."/>
            <person name="Ni P."/>
            <person name="Dong W."/>
            <person name="Hu S."/>
            <person name="Zeng C."/>
            <person name="Zhang J."/>
            <person name="Zhang Y."/>
            <person name="Li R."/>
            <person name="Xu Z."/>
            <person name="Li S."/>
            <person name="Li X."/>
            <person name="Zheng H."/>
            <person name="Cong L."/>
            <person name="Lin L."/>
            <person name="Yin J."/>
            <person name="Geng J."/>
            <person name="Li G."/>
            <person name="Shi J."/>
            <person name="Liu J."/>
            <person name="Lv H."/>
            <person name="Li J."/>
            <person name="Wang J."/>
            <person name="Deng Y."/>
            <person name="Ran L."/>
            <person name="Shi X."/>
            <person name="Wang X."/>
            <person name="Wu Q."/>
            <person name="Li C."/>
            <person name="Ren X."/>
            <person name="Wang J."/>
            <person name="Wang X."/>
            <person name="Li D."/>
            <person name="Liu D."/>
            <person name="Zhang X."/>
            <person name="Ji Z."/>
            <person name="Zhao W."/>
            <person name="Sun Y."/>
            <person name="Zhang Z."/>
            <person name="Bao J."/>
            <person name="Han Y."/>
            <person name="Dong L."/>
            <person name="Ji J."/>
            <person name="Chen P."/>
            <person name="Wu S."/>
            <person name="Liu J."/>
            <person name="Xiao Y."/>
            <person name="Bu D."/>
            <person name="Tan J."/>
            <person name="Yang L."/>
            <person name="Ye C."/>
            <person name="Zhang J."/>
            <person name="Xu J."/>
            <person name="Zhou Y."/>
            <person name="Yu Y."/>
            <person name="Zhang B."/>
            <person name="Zhuang S."/>
            <person name="Wei H."/>
            <person name="Liu B."/>
            <person name="Lei M."/>
            <person name="Yu H."/>
            <person name="Li Y."/>
            <person name="Xu H."/>
            <person name="Wei S."/>
            <person name="He X."/>
            <person name="Fang L."/>
            <person name="Zhang Z."/>
            <person name="Zhang Y."/>
            <person name="Huang X."/>
            <person name="Su Z."/>
            <person name="Tong W."/>
            <person name="Li J."/>
            <person name="Tong Z."/>
            <person name="Li S."/>
            <person name="Ye J."/>
            <person name="Wang L."/>
            <person name="Fang L."/>
            <person name="Lei T."/>
            <person name="Chen C.-S."/>
            <person name="Chen H.-C."/>
            <person name="Xu Z."/>
            <person name="Li H."/>
            <person name="Huang H."/>
            <person name="Zhang F."/>
            <person name="Xu H."/>
            <person name="Li N."/>
            <person name="Zhao C."/>
            <person name="Li S."/>
            <person name="Dong L."/>
            <person name="Huang Y."/>
            <person name="Li L."/>
            <person name="Xi Y."/>
            <person name="Qi Q."/>
            <person name="Li W."/>
            <person name="Zhang B."/>
            <person name="Hu W."/>
            <person name="Zhang Y."/>
            <person name="Tian X."/>
            <person name="Jiao Y."/>
            <person name="Liang X."/>
            <person name="Jin J."/>
            <person name="Gao L."/>
            <person name="Zheng W."/>
            <person name="Hao B."/>
            <person name="Liu S.-M."/>
            <person name="Wang W."/>
            <person name="Yuan L."/>
            <person name="Cao M."/>
            <person name="McDermott J."/>
            <person name="Samudrala R."/>
            <person name="Wang J."/>
            <person name="Wong G.K.-S."/>
            <person name="Yang H."/>
        </authorList>
    </citation>
    <scope>NUCLEOTIDE SEQUENCE [LARGE SCALE GENOMIC DNA]</scope>
    <source>
        <strain>cv. Nipponbare</strain>
    </source>
</reference>
<reference key="5">
    <citation type="journal article" date="2003" name="Science">
        <title>Collection, mapping, and annotation of over 28,000 cDNA clones from japonica rice.</title>
        <authorList>
            <consortium name="The rice full-length cDNA consortium"/>
        </authorList>
    </citation>
    <scope>NUCLEOTIDE SEQUENCE [LARGE SCALE MRNA]</scope>
    <source>
        <strain>cv. Nipponbare</strain>
    </source>
</reference>
<gene>
    <name type="ordered locus">Os07g0545400</name>
    <name type="ordered locus">LOC_Os07g36140</name>
    <name type="ORF">OJ1582_D10.26</name>
    <name type="ORF">OsJ_023674</name>
</gene>
<accession>Q6ZL42</accession>
<accession>Q0D5P4</accession>
<sequence length="135" mass="13976">MAGRGKAIGSGAAKKAMSRSSKAGLQFPVGRIARFLKAGKYAERVGAGAPVYLAAVLEYLAAEVLELAGNAARDNKKTRIVPRHIQLAVRNDEELSRLLGTVTIASGGVMPNIHNLLLPKKAGGSAKAAAGDDDN</sequence>
<feature type="chain" id="PRO_0000055259" description="Probable histone H2A.2">
    <location>
        <begin position="1"/>
        <end position="135"/>
    </location>
</feature>
<name>H2A2_ORYSJ</name>
<protein>
    <recommendedName>
        <fullName>Probable histone H2A.2</fullName>
    </recommendedName>
</protein>
<evidence type="ECO:0000250" key="1"/>
<evidence type="ECO:0000305" key="2"/>
<proteinExistence type="evidence at transcript level"/>
<keyword id="KW-0158">Chromosome</keyword>
<keyword id="KW-0238">DNA-binding</keyword>
<keyword id="KW-0544">Nucleosome core</keyword>
<keyword id="KW-0539">Nucleus</keyword>
<keyword id="KW-1185">Reference proteome</keyword>
<organism>
    <name type="scientific">Oryza sativa subsp. japonica</name>
    <name type="common">Rice</name>
    <dbReference type="NCBI Taxonomy" id="39947"/>
    <lineage>
        <taxon>Eukaryota</taxon>
        <taxon>Viridiplantae</taxon>
        <taxon>Streptophyta</taxon>
        <taxon>Embryophyta</taxon>
        <taxon>Tracheophyta</taxon>
        <taxon>Spermatophyta</taxon>
        <taxon>Magnoliopsida</taxon>
        <taxon>Liliopsida</taxon>
        <taxon>Poales</taxon>
        <taxon>Poaceae</taxon>
        <taxon>BOP clade</taxon>
        <taxon>Oryzoideae</taxon>
        <taxon>Oryzeae</taxon>
        <taxon>Oryzinae</taxon>
        <taxon>Oryza</taxon>
        <taxon>Oryza sativa</taxon>
    </lineage>
</organism>
<dbReference type="EMBL" id="AP003838">
    <property type="protein sequence ID" value="BAC83134.1"/>
    <property type="molecule type" value="Genomic_DNA"/>
</dbReference>
<dbReference type="EMBL" id="AP008213">
    <property type="protein sequence ID" value="BAF21829.1"/>
    <property type="molecule type" value="Genomic_DNA"/>
</dbReference>
<dbReference type="EMBL" id="AP014963">
    <property type="protein sequence ID" value="BAT02000.1"/>
    <property type="molecule type" value="Genomic_DNA"/>
</dbReference>
<dbReference type="EMBL" id="CM000144">
    <property type="protein sequence ID" value="EAZ40191.1"/>
    <property type="molecule type" value="Genomic_DNA"/>
</dbReference>
<dbReference type="EMBL" id="AK059228">
    <property type="status" value="NOT_ANNOTATED_CDS"/>
    <property type="molecule type" value="mRNA"/>
</dbReference>
<dbReference type="RefSeq" id="XP_015646584.1">
    <property type="nucleotide sequence ID" value="XM_015791098.1"/>
</dbReference>
<dbReference type="SMR" id="Q6ZL42"/>
<dbReference type="FunCoup" id="Q6ZL42">
    <property type="interactions" value="1963"/>
</dbReference>
<dbReference type="STRING" id="39947.Q6ZL42"/>
<dbReference type="PaxDb" id="39947-Q6ZL42"/>
<dbReference type="EnsemblPlants" id="Os07t0545400-01">
    <property type="protein sequence ID" value="Os07t0545400-01"/>
    <property type="gene ID" value="Os07g0545400"/>
</dbReference>
<dbReference type="Gramene" id="Os07t0545400-01">
    <property type="protein sequence ID" value="Os07t0545400-01"/>
    <property type="gene ID" value="Os07g0545400"/>
</dbReference>
<dbReference type="KEGG" id="dosa:Os07g0545400"/>
<dbReference type="eggNOG" id="KOG1756">
    <property type="taxonomic scope" value="Eukaryota"/>
</dbReference>
<dbReference type="HOGENOM" id="CLU_062828_3_0_1"/>
<dbReference type="InParanoid" id="Q6ZL42"/>
<dbReference type="OMA" id="HYSKRVG"/>
<dbReference type="OrthoDB" id="685828at2759"/>
<dbReference type="Proteomes" id="UP000000763">
    <property type="component" value="Chromosome 7"/>
</dbReference>
<dbReference type="Proteomes" id="UP000007752">
    <property type="component" value="Chromosome 7"/>
</dbReference>
<dbReference type="Proteomes" id="UP000059680">
    <property type="component" value="Chromosome 7"/>
</dbReference>
<dbReference type="ExpressionAtlas" id="Q6ZL42">
    <property type="expression patterns" value="baseline and differential"/>
</dbReference>
<dbReference type="GO" id="GO:0000786">
    <property type="term" value="C:nucleosome"/>
    <property type="evidence" value="ECO:0000318"/>
    <property type="project" value="GO_Central"/>
</dbReference>
<dbReference type="GO" id="GO:0005634">
    <property type="term" value="C:nucleus"/>
    <property type="evidence" value="ECO:0000318"/>
    <property type="project" value="GO_Central"/>
</dbReference>
<dbReference type="GO" id="GO:0003677">
    <property type="term" value="F:DNA binding"/>
    <property type="evidence" value="ECO:0007669"/>
    <property type="project" value="UniProtKB-KW"/>
</dbReference>
<dbReference type="GO" id="GO:0046982">
    <property type="term" value="F:protein heterodimerization activity"/>
    <property type="evidence" value="ECO:0007669"/>
    <property type="project" value="InterPro"/>
</dbReference>
<dbReference type="GO" id="GO:0030527">
    <property type="term" value="F:structural constituent of chromatin"/>
    <property type="evidence" value="ECO:0000318"/>
    <property type="project" value="GO_Central"/>
</dbReference>
<dbReference type="GO" id="GO:0031507">
    <property type="term" value="P:heterochromatin formation"/>
    <property type="evidence" value="ECO:0000318"/>
    <property type="project" value="GO_Central"/>
</dbReference>
<dbReference type="CDD" id="cd00074">
    <property type="entry name" value="HFD_H2A"/>
    <property type="match status" value="1"/>
</dbReference>
<dbReference type="FunFam" id="1.10.20.10:FF:000009">
    <property type="entry name" value="Histone H2A"/>
    <property type="match status" value="1"/>
</dbReference>
<dbReference type="Gene3D" id="1.10.20.10">
    <property type="entry name" value="Histone, subunit A"/>
    <property type="match status" value="1"/>
</dbReference>
<dbReference type="InterPro" id="IPR009072">
    <property type="entry name" value="Histone-fold"/>
</dbReference>
<dbReference type="InterPro" id="IPR002119">
    <property type="entry name" value="Histone_H2A"/>
</dbReference>
<dbReference type="InterPro" id="IPR007125">
    <property type="entry name" value="Histone_H2A/H2B/H3"/>
</dbReference>
<dbReference type="InterPro" id="IPR032454">
    <property type="entry name" value="Histone_H2A_C"/>
</dbReference>
<dbReference type="InterPro" id="IPR032458">
    <property type="entry name" value="Histone_H2A_CS"/>
</dbReference>
<dbReference type="PANTHER" id="PTHR23430">
    <property type="entry name" value="HISTONE H2A"/>
    <property type="match status" value="1"/>
</dbReference>
<dbReference type="Pfam" id="PF00125">
    <property type="entry name" value="Histone"/>
    <property type="match status" value="1"/>
</dbReference>
<dbReference type="Pfam" id="PF16211">
    <property type="entry name" value="Histone_H2A_C"/>
    <property type="match status" value="1"/>
</dbReference>
<dbReference type="PRINTS" id="PR00620">
    <property type="entry name" value="HISTONEH2A"/>
</dbReference>
<dbReference type="SMART" id="SM00414">
    <property type="entry name" value="H2A"/>
    <property type="match status" value="1"/>
</dbReference>
<dbReference type="SUPFAM" id="SSF47113">
    <property type="entry name" value="Histone-fold"/>
    <property type="match status" value="1"/>
</dbReference>
<dbReference type="PROSITE" id="PS00046">
    <property type="entry name" value="HISTONE_H2A"/>
    <property type="match status" value="1"/>
</dbReference>